<organism>
    <name type="scientific">Pseudallescheria apiosperma</name>
    <name type="common">Scedosporium apiospermum</name>
    <dbReference type="NCBI Taxonomy" id="563466"/>
    <lineage>
        <taxon>Eukaryota</taxon>
        <taxon>Fungi</taxon>
        <taxon>Dikarya</taxon>
        <taxon>Ascomycota</taxon>
        <taxon>Pezizomycotina</taxon>
        <taxon>Sordariomycetes</taxon>
        <taxon>Hypocreomycetidae</taxon>
        <taxon>Microascales</taxon>
        <taxon>Microascaceae</taxon>
        <taxon>Scedosporium</taxon>
    </lineage>
</organism>
<protein>
    <recommendedName>
        <fullName evidence="6">Fungal defensin scedosporisin-2</fullName>
        <shortName evidence="6">fDEF</shortName>
    </recommendedName>
</protein>
<feature type="signal peptide" evidence="3">
    <location>
        <begin position="1"/>
        <end position="25"/>
    </location>
</feature>
<feature type="propeptide" id="PRO_0000449427" evidence="8">
    <location>
        <begin position="26"/>
        <end position="56"/>
    </location>
</feature>
<feature type="chain" id="PRO_0000449428" description="Fungal defensin scedosporisin-2">
    <location>
        <begin position="53"/>
        <end position="94"/>
    </location>
</feature>
<feature type="region of interest" description="Interaction site with membrane interface" evidence="8">
    <location>
        <begin position="57"/>
        <end position="60"/>
    </location>
</feature>
<feature type="region of interest" description="Interaction site with membrane interface" evidence="8">
    <location>
        <begin position="83"/>
        <end position="90"/>
    </location>
</feature>
<feature type="binding site" evidence="2">
    <location>
        <position position="54"/>
    </location>
    <ligand>
        <name>beta-D-GlcNAc-(1-&gt;4)-Mur2Ac(oyl-L-Ala-gamma-D-Glu-L-Lys-D-Ala-D-Ala)-di-trans,octa-cis-undecaprenyl diphosphate</name>
        <dbReference type="ChEBI" id="CHEBI:60033"/>
    </ligand>
</feature>
<feature type="binding site" evidence="2">
    <location>
        <position position="55"/>
    </location>
    <ligand>
        <name>beta-D-GlcNAc-(1-&gt;4)-Mur2Ac(oyl-L-Ala-gamma-D-Glu-L-Lys-D-Ala-D-Ala)-di-trans,octa-cis-undecaprenyl diphosphate</name>
        <dbReference type="ChEBI" id="CHEBI:60033"/>
    </ligand>
</feature>
<feature type="binding site" evidence="2">
    <location>
        <position position="56"/>
    </location>
    <ligand>
        <name>beta-D-GlcNAc-(1-&gt;4)-Mur2Ac(oyl-L-Ala-gamma-D-Glu-L-Lys-D-Ala-D-Ala)-di-trans,octa-cis-undecaprenyl diphosphate</name>
        <dbReference type="ChEBI" id="CHEBI:60033"/>
    </ligand>
</feature>
<feature type="binding site" evidence="2">
    <location>
        <position position="66"/>
    </location>
    <ligand>
        <name>beta-D-GlcNAc-(1-&gt;4)-Mur2Ac(oyl-L-Ala-gamma-D-Glu-L-Lys-D-Ala-D-Ala)-di-trans,octa-cis-undecaprenyl diphosphate</name>
        <dbReference type="ChEBI" id="CHEBI:60033"/>
    </ligand>
</feature>
<feature type="binding site" evidence="2">
    <location>
        <position position="91"/>
    </location>
    <ligand>
        <name>beta-D-GlcNAc-(1-&gt;4)-Mur2Ac(oyl-L-Ala-gamma-D-Glu-L-Lys-D-Ala-D-Ala)-di-trans,octa-cis-undecaprenyl diphosphate</name>
        <dbReference type="ChEBI" id="CHEBI:60033"/>
    </ligand>
</feature>
<feature type="disulfide bond" evidence="1 4">
    <location>
        <begin position="56"/>
        <end position="78"/>
    </location>
</feature>
<feature type="disulfide bond" evidence="1 4">
    <location>
        <begin position="63"/>
        <end position="91"/>
    </location>
</feature>
<feature type="disulfide bond" evidence="1 4">
    <location>
        <begin position="67"/>
        <end position="93"/>
    </location>
</feature>
<feature type="mutagenesis site" description="Complete loss of antibacterial activity." evidence="5">
    <location>
        <begin position="81"/>
        <end position="86"/>
    </location>
</feature>
<gene>
    <name type="ORF">SAPIO_CDS6842</name>
</gene>
<accession>A0A084G2W8</accession>
<proteinExistence type="evidence at protein level"/>
<evidence type="ECO:0000250" key="1">
    <source>
        <dbReference type="UniProtKB" id="I1T3C7"/>
    </source>
</evidence>
<evidence type="ECO:0000250" key="2">
    <source>
        <dbReference type="UniProtKB" id="Q53I06"/>
    </source>
</evidence>
<evidence type="ECO:0000255" key="3"/>
<evidence type="ECO:0000255" key="4">
    <source>
        <dbReference type="PROSITE-ProRule" id="PRU00710"/>
    </source>
</evidence>
<evidence type="ECO:0000269" key="5">
    <source>
    </source>
</evidence>
<evidence type="ECO:0000303" key="6">
    <source>
    </source>
</evidence>
<evidence type="ECO:0000305" key="7"/>
<evidence type="ECO:0000305" key="8">
    <source>
    </source>
</evidence>
<comment type="function">
    <text evidence="2 5">Antibacterial peptide potently active against Gram-positive bacteria (PubMed:29174563). May act by selectively inhibiting peptidoglycan biosynthesis through complex formation with the cell wall precursor lipid II (1:1 molar ratio) thus inhibiting cell wall synthesis (By similarity). Shows remarkably activity against resistant isolates such as methicillin-resistant Staphylococcus aureus (MRSA) and vancomycin-resistant Enterococci (VRE) at the concentration of micromolar level (PubMed:29174563). Does not act by destroying the membrane integrity, which is consistent with its nonamphiphilic architecture (PubMed:29174563). Acts more rapidly than vancomycin (PubMed:29174563). Shows low hemolysis and cytotoxicity and high serum stability (PubMed:29174563). In vivo, is as efficient as vancomycin to protect mouse peritonitis models from MRSA infections (PubMed:29174563).</text>
</comment>
<comment type="subcellular location">
    <subcellularLocation>
        <location evidence="7">Secreted</location>
    </subcellularLocation>
    <subcellularLocation>
        <location evidence="2">Target cell membrane</location>
    </subcellularLocation>
</comment>
<comment type="domain">
    <text evidence="8">Has the structural arrangement of an alpha-helix connected to a beta-sheet by disulfide bonds (CSalpha/beta).</text>
</comment>
<comment type="similarity">
    <text evidence="7">Belongs to the invertebrate defensin family.</text>
</comment>
<comment type="sequence caution" evidence="7">
    <conflict type="frameshift">
        <sequence resource="EMBL-CDS" id="KEZ41680"/>
    </conflict>
</comment>
<name>DEFS2_PSEDA</name>
<sequence>MKFSNISIAALFTILASTAMAAPAADSPDSIVAREPAPVEETYEAPSGLEKRGFGCPGSEKKCHNHCKSVKGYKGGYCDGPYIPFVGRPRCKCY</sequence>
<reference key="1">
    <citation type="journal article" date="2014" name="Genome Announc.">
        <title>Draft genome sequence of the pathogenic fungus Scedosporium apiospermum.</title>
        <authorList>
            <person name="Vandeputte P."/>
            <person name="Ghamrawi S."/>
            <person name="Rechenmann M."/>
            <person name="Iltis A."/>
            <person name="Giraud S."/>
            <person name="Fleury M."/>
            <person name="Thornton C."/>
            <person name="Delhaes L."/>
            <person name="Meyer W."/>
            <person name="Papon N."/>
            <person name="Bouchara J.-P."/>
        </authorList>
    </citation>
    <scope>NUCLEOTIDE SEQUENCE [LARGE SCALE GENOMIC DNA]</scope>
    <source>
        <strain>IHEM 14462</strain>
    </source>
</reference>
<reference key="2">
    <citation type="journal article" date="2018" name="Peptides">
        <title>Invasive fungi-derived defensins kill drug-resistant bacterial pathogens.</title>
        <authorList>
            <person name="Wu J."/>
            <person name="Liu S."/>
            <person name="Wang H."/>
        </authorList>
    </citation>
    <scope>FUNCTION</scope>
    <scope>SYNTHESIS OF 53-88</scope>
    <scope>3D-STRUCTURE MODELING</scope>
    <scope>MUTAGENESIS OF 81-PRO--VAL-86</scope>
</reference>
<dbReference type="EMBL" id="JOWA01000108">
    <property type="protein sequence ID" value="KEZ41680.1"/>
    <property type="status" value="ALT_FRAME"/>
    <property type="molecule type" value="Genomic_DNA"/>
</dbReference>
<dbReference type="RefSeq" id="XP_016641479.1">
    <property type="nucleotide sequence ID" value="XM_016788842.1"/>
</dbReference>
<dbReference type="SMR" id="A0A084G2W8"/>
<dbReference type="GeneID" id="27725914"/>
<dbReference type="KEGG" id="sapo:SAPIO_CDS6842"/>
<dbReference type="HOGENOM" id="CLU_1950059_0_0_1"/>
<dbReference type="OrthoDB" id="4173831at2759"/>
<dbReference type="Proteomes" id="UP000028545">
    <property type="component" value="Unassembled WGS sequence"/>
</dbReference>
<dbReference type="GO" id="GO:0005576">
    <property type="term" value="C:extracellular region"/>
    <property type="evidence" value="ECO:0007669"/>
    <property type="project" value="UniProtKB-SubCell"/>
</dbReference>
<dbReference type="GO" id="GO:0016020">
    <property type="term" value="C:membrane"/>
    <property type="evidence" value="ECO:0007669"/>
    <property type="project" value="UniProtKB-KW"/>
</dbReference>
<dbReference type="GO" id="GO:0044218">
    <property type="term" value="C:other organism cell membrane"/>
    <property type="evidence" value="ECO:0007669"/>
    <property type="project" value="UniProtKB-KW"/>
</dbReference>
<dbReference type="GO" id="GO:0008289">
    <property type="term" value="F:lipid binding"/>
    <property type="evidence" value="ECO:0007669"/>
    <property type="project" value="UniProtKB-KW"/>
</dbReference>
<dbReference type="GO" id="GO:0042742">
    <property type="term" value="P:defense response to bacterium"/>
    <property type="evidence" value="ECO:0007669"/>
    <property type="project" value="UniProtKB-KW"/>
</dbReference>
<dbReference type="GO" id="GO:0002376">
    <property type="term" value="P:immune system process"/>
    <property type="evidence" value="ECO:0007669"/>
    <property type="project" value="UniProtKB-KW"/>
</dbReference>
<dbReference type="Gene3D" id="3.30.30.10">
    <property type="entry name" value="Knottin, scorpion toxin-like"/>
    <property type="match status" value="1"/>
</dbReference>
<dbReference type="InterPro" id="IPR001542">
    <property type="entry name" value="Defensin_invertebrate/fungal"/>
</dbReference>
<dbReference type="InterPro" id="IPR036574">
    <property type="entry name" value="Scorpion_toxin-like_sf"/>
</dbReference>
<dbReference type="Pfam" id="PF01097">
    <property type="entry name" value="Defensin_2"/>
    <property type="match status" value="1"/>
</dbReference>
<dbReference type="SUPFAM" id="SSF57095">
    <property type="entry name" value="Scorpion toxin-like"/>
    <property type="match status" value="1"/>
</dbReference>
<dbReference type="PROSITE" id="PS51378">
    <property type="entry name" value="INVERT_DEFENSINS"/>
    <property type="match status" value="1"/>
</dbReference>
<keyword id="KW-0044">Antibiotic</keyword>
<keyword id="KW-0929">Antimicrobial</keyword>
<keyword id="KW-0165">Cleavage on pair of basic residues</keyword>
<keyword id="KW-0211">Defensin</keyword>
<keyword id="KW-1015">Disulfide bond</keyword>
<keyword id="KW-0391">Immunity</keyword>
<keyword id="KW-0399">Innate immunity</keyword>
<keyword id="KW-0446">Lipid-binding</keyword>
<keyword id="KW-0472">Membrane</keyword>
<keyword id="KW-1185">Reference proteome</keyword>
<keyword id="KW-0964">Secreted</keyword>
<keyword id="KW-0732">Signal</keyword>
<keyword id="KW-1052">Target cell membrane</keyword>
<keyword id="KW-1053">Target membrane</keyword>